<organism>
    <name type="scientific">Staphylococcus aureus (strain Newman)</name>
    <dbReference type="NCBI Taxonomy" id="426430"/>
    <lineage>
        <taxon>Bacteria</taxon>
        <taxon>Bacillati</taxon>
        <taxon>Bacillota</taxon>
        <taxon>Bacilli</taxon>
        <taxon>Bacillales</taxon>
        <taxon>Staphylococcaceae</taxon>
        <taxon>Staphylococcus</taxon>
    </lineage>
</organism>
<proteinExistence type="inferred from homology"/>
<accession>A6QJ37</accession>
<dbReference type="EC" id="2.7.1.144" evidence="1"/>
<dbReference type="EMBL" id="AP009351">
    <property type="protein sequence ID" value="BAF68369.1"/>
    <property type="molecule type" value="Genomic_DNA"/>
</dbReference>
<dbReference type="RefSeq" id="WP_000604135.1">
    <property type="nucleotide sequence ID" value="NZ_JBBIAE010000006.1"/>
</dbReference>
<dbReference type="SMR" id="A6QJ37"/>
<dbReference type="KEGG" id="sae:NWMN_2097"/>
<dbReference type="HOGENOM" id="CLU_050013_5_0_9"/>
<dbReference type="UniPathway" id="UPA00704">
    <property type="reaction ID" value="UER00715"/>
</dbReference>
<dbReference type="Proteomes" id="UP000006386">
    <property type="component" value="Chromosome"/>
</dbReference>
<dbReference type="GO" id="GO:0005829">
    <property type="term" value="C:cytosol"/>
    <property type="evidence" value="ECO:0007669"/>
    <property type="project" value="TreeGrafter"/>
</dbReference>
<dbReference type="GO" id="GO:0005524">
    <property type="term" value="F:ATP binding"/>
    <property type="evidence" value="ECO:0007669"/>
    <property type="project" value="UniProtKB-KW"/>
</dbReference>
<dbReference type="GO" id="GO:0008443">
    <property type="term" value="F:phosphofructokinase activity"/>
    <property type="evidence" value="ECO:0007669"/>
    <property type="project" value="TreeGrafter"/>
</dbReference>
<dbReference type="GO" id="GO:0009024">
    <property type="term" value="F:tagatose-6-phosphate kinase activity"/>
    <property type="evidence" value="ECO:0007669"/>
    <property type="project" value="UniProtKB-UniRule"/>
</dbReference>
<dbReference type="GO" id="GO:2001059">
    <property type="term" value="P:D-tagatose 6-phosphate catabolic process"/>
    <property type="evidence" value="ECO:0007669"/>
    <property type="project" value="UniProtKB-UniRule"/>
</dbReference>
<dbReference type="GO" id="GO:0019512">
    <property type="term" value="P:lactose catabolic process via tagatose-6-phosphate"/>
    <property type="evidence" value="ECO:0007669"/>
    <property type="project" value="InterPro"/>
</dbReference>
<dbReference type="CDD" id="cd01164">
    <property type="entry name" value="FruK_PfkB_like"/>
    <property type="match status" value="1"/>
</dbReference>
<dbReference type="FunFam" id="3.40.1190.20:FF:000001">
    <property type="entry name" value="Phosphofructokinase"/>
    <property type="match status" value="1"/>
</dbReference>
<dbReference type="Gene3D" id="3.40.1190.20">
    <property type="match status" value="1"/>
</dbReference>
<dbReference type="HAMAP" id="MF_01557">
    <property type="entry name" value="LacC"/>
    <property type="match status" value="1"/>
</dbReference>
<dbReference type="InterPro" id="IPR002173">
    <property type="entry name" value="Carboh/pur_kinase_PfkB_CS"/>
</dbReference>
<dbReference type="InterPro" id="IPR005926">
    <property type="entry name" value="LacC"/>
</dbReference>
<dbReference type="InterPro" id="IPR011611">
    <property type="entry name" value="PfkB_dom"/>
</dbReference>
<dbReference type="InterPro" id="IPR029056">
    <property type="entry name" value="Ribokinase-like"/>
</dbReference>
<dbReference type="InterPro" id="IPR017583">
    <property type="entry name" value="Tagatose/fructose_Pkinase"/>
</dbReference>
<dbReference type="NCBIfam" id="TIGR03168">
    <property type="entry name" value="1-PFK"/>
    <property type="match status" value="1"/>
</dbReference>
<dbReference type="NCBIfam" id="TIGR01231">
    <property type="entry name" value="lacC"/>
    <property type="match status" value="1"/>
</dbReference>
<dbReference type="NCBIfam" id="NF010033">
    <property type="entry name" value="PRK13508.1"/>
    <property type="match status" value="1"/>
</dbReference>
<dbReference type="PANTHER" id="PTHR46566:SF5">
    <property type="entry name" value="1-PHOSPHOFRUCTOKINASE"/>
    <property type="match status" value="1"/>
</dbReference>
<dbReference type="PANTHER" id="PTHR46566">
    <property type="entry name" value="1-PHOSPHOFRUCTOKINASE-RELATED"/>
    <property type="match status" value="1"/>
</dbReference>
<dbReference type="Pfam" id="PF00294">
    <property type="entry name" value="PfkB"/>
    <property type="match status" value="1"/>
</dbReference>
<dbReference type="PIRSF" id="PIRSF000535">
    <property type="entry name" value="1PFK/6PFK/LacC"/>
    <property type="match status" value="1"/>
</dbReference>
<dbReference type="SUPFAM" id="SSF53613">
    <property type="entry name" value="Ribokinase-like"/>
    <property type="match status" value="1"/>
</dbReference>
<dbReference type="PROSITE" id="PS00583">
    <property type="entry name" value="PFKB_KINASES_1"/>
    <property type="match status" value="1"/>
</dbReference>
<dbReference type="PROSITE" id="PS00584">
    <property type="entry name" value="PFKB_KINASES_2"/>
    <property type="match status" value="1"/>
</dbReference>
<feature type="chain" id="PRO_1000073580" description="Tagatose-6-phosphate kinase">
    <location>
        <begin position="1"/>
        <end position="310"/>
    </location>
</feature>
<gene>
    <name evidence="1" type="primary">lacC</name>
    <name type="ordered locus">NWMN_2097</name>
</gene>
<comment type="catalytic activity">
    <reaction evidence="1">
        <text>D-tagatofuranose 6-phosphate + ATP = D-tagatofuranose 1,6-bisphosphate + ADP + H(+)</text>
        <dbReference type="Rhea" id="RHEA:12420"/>
        <dbReference type="ChEBI" id="CHEBI:15378"/>
        <dbReference type="ChEBI" id="CHEBI:30616"/>
        <dbReference type="ChEBI" id="CHEBI:58694"/>
        <dbReference type="ChEBI" id="CHEBI:58695"/>
        <dbReference type="ChEBI" id="CHEBI:456216"/>
        <dbReference type="EC" id="2.7.1.144"/>
    </reaction>
</comment>
<comment type="pathway">
    <text evidence="1">Carbohydrate metabolism; D-tagatose 6-phosphate degradation; D-glyceraldehyde 3-phosphate and glycerone phosphate from D-tagatose 6-phosphate: step 1/2.</text>
</comment>
<comment type="similarity">
    <text evidence="1">Belongs to the carbohydrate kinase PfkB family. LacC subfamily.</text>
</comment>
<name>LACC_STAAE</name>
<keyword id="KW-0067">ATP-binding</keyword>
<keyword id="KW-0418">Kinase</keyword>
<keyword id="KW-0423">Lactose metabolism</keyword>
<keyword id="KW-0547">Nucleotide-binding</keyword>
<keyword id="KW-0808">Transferase</keyword>
<reference key="1">
    <citation type="journal article" date="2008" name="J. Bacteriol.">
        <title>Genome sequence of Staphylococcus aureus strain Newman and comparative analysis of staphylococcal genomes: polymorphism and evolution of two major pathogenicity islands.</title>
        <authorList>
            <person name="Baba T."/>
            <person name="Bae T."/>
            <person name="Schneewind O."/>
            <person name="Takeuchi F."/>
            <person name="Hiramatsu K."/>
        </authorList>
    </citation>
    <scope>NUCLEOTIDE SEQUENCE [LARGE SCALE GENOMIC DNA]</scope>
    <source>
        <strain>Newman</strain>
    </source>
</reference>
<sequence length="310" mass="33853">MILTLTLNPSVDISYPLTALKLDDVNRVQEVSKTAGGKGLNVTRVLAQVGEPVLASGFIGGELGQFIAKKLDHADIKHAFYNIKGETRNCIAILHEGQQTEILEQGPEIDNQEAAGFIKHFEQLLEKVEAVAISGSLPKGLNQDYYAQIIERCQNKGVPVILDCSGATLQTVLENPYKPTVIKPNISELYQLLNQPLDESLESLKQAVSQPLFEGIEWIIVSLGAQGAFAKHNHTFYRVNIPTISVLNPVGSGDSTVAGITSAILNHENDHDLLKKANTLGMLNAQEAQTGYVNLNNYDDLFNQIEVLEV</sequence>
<evidence type="ECO:0000255" key="1">
    <source>
        <dbReference type="HAMAP-Rule" id="MF_01557"/>
    </source>
</evidence>
<protein>
    <recommendedName>
        <fullName evidence="1">Tagatose-6-phosphate kinase</fullName>
        <ecNumber evidence="1">2.7.1.144</ecNumber>
    </recommendedName>
    <alternativeName>
        <fullName evidence="1">Phosphotagatokinase</fullName>
    </alternativeName>
</protein>